<organism>
    <name type="scientific">Phocaeicola vulgatus (strain ATCC 8482 / DSM 1447 / JCM 5826 / CCUG 4940 / NBRC 14291 / NCTC 11154)</name>
    <name type="common">Bacteroides vulgatus</name>
    <dbReference type="NCBI Taxonomy" id="435590"/>
    <lineage>
        <taxon>Bacteria</taxon>
        <taxon>Pseudomonadati</taxon>
        <taxon>Bacteroidota</taxon>
        <taxon>Bacteroidia</taxon>
        <taxon>Bacteroidales</taxon>
        <taxon>Bacteroidaceae</taxon>
        <taxon>Phocaeicola</taxon>
    </lineage>
</organism>
<comment type="function">
    <text evidence="1">DNA-dependent RNA polymerase catalyzes the transcription of DNA into RNA using the four ribonucleoside triphosphates as substrates.</text>
</comment>
<comment type="catalytic activity">
    <reaction evidence="1">
        <text>RNA(n) + a ribonucleoside 5'-triphosphate = RNA(n+1) + diphosphate</text>
        <dbReference type="Rhea" id="RHEA:21248"/>
        <dbReference type="Rhea" id="RHEA-COMP:14527"/>
        <dbReference type="Rhea" id="RHEA-COMP:17342"/>
        <dbReference type="ChEBI" id="CHEBI:33019"/>
        <dbReference type="ChEBI" id="CHEBI:61557"/>
        <dbReference type="ChEBI" id="CHEBI:140395"/>
        <dbReference type="EC" id="2.7.7.6"/>
    </reaction>
</comment>
<comment type="cofactor">
    <cofactor evidence="1">
        <name>Mg(2+)</name>
        <dbReference type="ChEBI" id="CHEBI:18420"/>
    </cofactor>
    <text evidence="1">Binds 1 Mg(2+) ion per subunit.</text>
</comment>
<comment type="cofactor">
    <cofactor evidence="1">
        <name>Zn(2+)</name>
        <dbReference type="ChEBI" id="CHEBI:29105"/>
    </cofactor>
    <text evidence="1">Binds 2 Zn(2+) ions per subunit.</text>
</comment>
<comment type="subunit">
    <text evidence="1">The RNAP catalytic core consists of 2 alpha, 1 beta, 1 beta' and 1 omega subunit. When a sigma factor is associated with the core the holoenzyme is formed, which can initiate transcription.</text>
</comment>
<comment type="similarity">
    <text evidence="1">Belongs to the RNA polymerase beta' chain family.</text>
</comment>
<protein>
    <recommendedName>
        <fullName evidence="1">DNA-directed RNA polymerase subunit beta'</fullName>
        <shortName evidence="1">RNAP subunit beta'</shortName>
        <ecNumber evidence="1">2.7.7.6</ecNumber>
    </recommendedName>
    <alternativeName>
        <fullName evidence="1">RNA polymerase subunit beta'</fullName>
    </alternativeName>
    <alternativeName>
        <fullName evidence="1">Transcriptase subunit beta'</fullName>
    </alternativeName>
</protein>
<dbReference type="EC" id="2.7.7.6" evidence="1"/>
<dbReference type="EMBL" id="CP000139">
    <property type="protein sequence ID" value="ABR38516.1"/>
    <property type="molecule type" value="Genomic_DNA"/>
</dbReference>
<dbReference type="RefSeq" id="WP_005844836.1">
    <property type="nucleotide sequence ID" value="NZ_JANSWM010000035.1"/>
</dbReference>
<dbReference type="SMR" id="A6KYK2"/>
<dbReference type="STRING" id="435590.BVU_0812"/>
<dbReference type="PaxDb" id="435590-BVU_0812"/>
<dbReference type="GeneID" id="5301779"/>
<dbReference type="KEGG" id="bvu:BVU_0812"/>
<dbReference type="eggNOG" id="COG0086">
    <property type="taxonomic scope" value="Bacteria"/>
</dbReference>
<dbReference type="HOGENOM" id="CLU_000524_3_1_10"/>
<dbReference type="BioCyc" id="BVUL435590:G1G59-854-MONOMER"/>
<dbReference type="Proteomes" id="UP000002861">
    <property type="component" value="Chromosome"/>
</dbReference>
<dbReference type="GO" id="GO:0000428">
    <property type="term" value="C:DNA-directed RNA polymerase complex"/>
    <property type="evidence" value="ECO:0007669"/>
    <property type="project" value="UniProtKB-KW"/>
</dbReference>
<dbReference type="GO" id="GO:0003677">
    <property type="term" value="F:DNA binding"/>
    <property type="evidence" value="ECO:0007669"/>
    <property type="project" value="UniProtKB-UniRule"/>
</dbReference>
<dbReference type="GO" id="GO:0003899">
    <property type="term" value="F:DNA-directed RNA polymerase activity"/>
    <property type="evidence" value="ECO:0007669"/>
    <property type="project" value="UniProtKB-UniRule"/>
</dbReference>
<dbReference type="GO" id="GO:0000287">
    <property type="term" value="F:magnesium ion binding"/>
    <property type="evidence" value="ECO:0007669"/>
    <property type="project" value="UniProtKB-UniRule"/>
</dbReference>
<dbReference type="GO" id="GO:0008270">
    <property type="term" value="F:zinc ion binding"/>
    <property type="evidence" value="ECO:0007669"/>
    <property type="project" value="UniProtKB-UniRule"/>
</dbReference>
<dbReference type="GO" id="GO:0006351">
    <property type="term" value="P:DNA-templated transcription"/>
    <property type="evidence" value="ECO:0007669"/>
    <property type="project" value="UniProtKB-UniRule"/>
</dbReference>
<dbReference type="CDD" id="cd02655">
    <property type="entry name" value="RNAP_beta'_C"/>
    <property type="match status" value="1"/>
</dbReference>
<dbReference type="CDD" id="cd01609">
    <property type="entry name" value="RNAP_beta'_N"/>
    <property type="match status" value="1"/>
</dbReference>
<dbReference type="Gene3D" id="1.10.132.30">
    <property type="match status" value="1"/>
</dbReference>
<dbReference type="Gene3D" id="1.10.150.390">
    <property type="match status" value="1"/>
</dbReference>
<dbReference type="Gene3D" id="1.10.1790.20">
    <property type="match status" value="1"/>
</dbReference>
<dbReference type="Gene3D" id="1.10.40.90">
    <property type="match status" value="1"/>
</dbReference>
<dbReference type="Gene3D" id="2.40.40.20">
    <property type="match status" value="1"/>
</dbReference>
<dbReference type="Gene3D" id="2.40.50.100">
    <property type="match status" value="3"/>
</dbReference>
<dbReference type="Gene3D" id="4.10.860.120">
    <property type="entry name" value="RNA polymerase II, clamp domain"/>
    <property type="match status" value="1"/>
</dbReference>
<dbReference type="Gene3D" id="1.10.274.100">
    <property type="entry name" value="RNA polymerase Rpb1, domain 3"/>
    <property type="match status" value="2"/>
</dbReference>
<dbReference type="HAMAP" id="MF_01322">
    <property type="entry name" value="RNApol_bact_RpoC"/>
    <property type="match status" value="1"/>
</dbReference>
<dbReference type="InterPro" id="IPR045867">
    <property type="entry name" value="DNA-dir_RpoC_beta_prime"/>
</dbReference>
<dbReference type="InterPro" id="IPR012754">
    <property type="entry name" value="DNA-dir_RpoC_beta_prime_bact"/>
</dbReference>
<dbReference type="InterPro" id="IPR000722">
    <property type="entry name" value="RNA_pol_asu"/>
</dbReference>
<dbReference type="InterPro" id="IPR006592">
    <property type="entry name" value="RNA_pol_N"/>
</dbReference>
<dbReference type="InterPro" id="IPR007080">
    <property type="entry name" value="RNA_pol_Rpb1_1"/>
</dbReference>
<dbReference type="InterPro" id="IPR007066">
    <property type="entry name" value="RNA_pol_Rpb1_3"/>
</dbReference>
<dbReference type="InterPro" id="IPR042102">
    <property type="entry name" value="RNA_pol_Rpb1_3_sf"/>
</dbReference>
<dbReference type="InterPro" id="IPR007083">
    <property type="entry name" value="RNA_pol_Rpb1_4"/>
</dbReference>
<dbReference type="InterPro" id="IPR007081">
    <property type="entry name" value="RNA_pol_Rpb1_5"/>
</dbReference>
<dbReference type="InterPro" id="IPR044893">
    <property type="entry name" value="RNA_pol_Rpb1_clamp_domain"/>
</dbReference>
<dbReference type="InterPro" id="IPR038120">
    <property type="entry name" value="Rpb1_funnel_sf"/>
</dbReference>
<dbReference type="NCBIfam" id="TIGR02386">
    <property type="entry name" value="rpoC_TIGR"/>
    <property type="match status" value="1"/>
</dbReference>
<dbReference type="PANTHER" id="PTHR19376">
    <property type="entry name" value="DNA-DIRECTED RNA POLYMERASE"/>
    <property type="match status" value="1"/>
</dbReference>
<dbReference type="PANTHER" id="PTHR19376:SF54">
    <property type="entry name" value="DNA-DIRECTED RNA POLYMERASE SUBUNIT BETA"/>
    <property type="match status" value="1"/>
</dbReference>
<dbReference type="Pfam" id="PF04997">
    <property type="entry name" value="RNA_pol_Rpb1_1"/>
    <property type="match status" value="1"/>
</dbReference>
<dbReference type="Pfam" id="PF00623">
    <property type="entry name" value="RNA_pol_Rpb1_2"/>
    <property type="match status" value="2"/>
</dbReference>
<dbReference type="Pfam" id="PF04983">
    <property type="entry name" value="RNA_pol_Rpb1_3"/>
    <property type="match status" value="1"/>
</dbReference>
<dbReference type="Pfam" id="PF05000">
    <property type="entry name" value="RNA_pol_Rpb1_4"/>
    <property type="match status" value="1"/>
</dbReference>
<dbReference type="Pfam" id="PF04998">
    <property type="entry name" value="RNA_pol_Rpb1_5"/>
    <property type="match status" value="1"/>
</dbReference>
<dbReference type="SMART" id="SM00663">
    <property type="entry name" value="RPOLA_N"/>
    <property type="match status" value="1"/>
</dbReference>
<dbReference type="SUPFAM" id="SSF64484">
    <property type="entry name" value="beta and beta-prime subunits of DNA dependent RNA-polymerase"/>
    <property type="match status" value="1"/>
</dbReference>
<proteinExistence type="inferred from homology"/>
<sequence length="1428" mass="158839">MAFRKETKIKSNFSKISIGLASPEEILENSSGEVLKPETINYRTYKPERDGLFCERIFGPVKDYECHCGKYKRIRYKGIVCDRCGVEVTEKKVRRERMGHIQLVVPVAHIWYFRSLPNKIGYLLGLPTKKLDAIVYYERYVVIQPGVKAEDGINKYDLLSEEEYLDILDTLPKENQYLEDTDPNKFIAKMGAEAIYDLLSTLDLDALSYELRHKASNDSSQQRKNEALKRLQVVESFRASRGRNKPEWMIVRIVPVIPPELRPLVPLDGGRFATSDLNDLYRRVIIRNNRLKRLIEIKAPEVILRNEKRMLQEAVDSLFDNSRKSSAVKTDANRPLKSLSDSLKGKQGRFRQNLLGKRVDYSARSVIVVGPELKMGECGIPKLMAAELYKPFIIRKLIERGIVKTVKSAKKIVDRKEPVIWDILEHVMKGHPVLLNRAPTLHRLGIQAFQPHMIEGKAIQLHPLACTAFNADFDGDQMAVHLPLSNDAILEAQMLMLQAHNILNPANGAPITVPAQDMVLGLYYITKLRKGAKGEGLTFYGPEEALIAYNEGKVDIHAIVNVVVKDLDKDGKIVDVMMKETSVGRVIVNEIVPAEVGYLNTIISKKSLRDIISDVIKAVGVARACEFLDGIKNLGYYMAFKGGLSFNLGDIIIPKEKEELVKRGNEEVEQIMMNYNMGFITDNERYNQVIDTWTHVNSDLSDILYKTIKNDDQGFNSVFMMLDSGARGSKEQIRQLSGMRGLMAKPQKAGAEGAQIIENPILSNFKEGLSVLEYFISTHGARKGLADTALKTADAGYLTRRLVDVSHDVIINEEDCGTLRGLVCTALKNNDEVIATLYERILGRVSVHDIVHPTTGKLIVAGGEEITEDIAQEIEDSPIESVEIRSVLTCESKKGVCAKCYGRNLASSRMVQKGEAVGVIAAQSIGEPGTQLTLRTFHAGGIAGNMAANASIVAKNNARLEFEELRTVDTVDEMGEAVKVVVGRLAEVRFIDVNTGIILSTHNVPYGSKLYAADGDIVEKGKLIAKWDPFNAVIITEATGKIEFESVVENVTYKVESDEATGLREIIIIESKDKTKVPSAHIVTEDGNLIRTYNLPVGGHVVVENGQAVKAGDIIVKIPRAVGKAGDITGGLPRVTELFEARNPSNPAVVSEIDGEITMGKIKRGNREIIVTSKTGEVKKYLVNLSKQILVQENDYVRAGTPLSDGAITPADILAIKGPTAVQEYIVNEVQDVYRLQGVKINDKHFEIIVRQMMRKVEIDEPGDTRFLEQQVVDKQEFMEENDRIWGKKVVVDSGDSQNLQPGQIVTARKLRDENSMLKRRDLKPVEVRDAIPATSTQILQGITRAALGTSSFMSAASFQETTKVLNEAAINGKVDRLEGMKENVICGHLIPAGTGQREFEKIIVGSKEEYDRILANRKNVLDYSEVE</sequence>
<name>RPOC_PHOV8</name>
<feature type="chain" id="PRO_0000308820" description="DNA-directed RNA polymerase subunit beta'">
    <location>
        <begin position="1"/>
        <end position="1428"/>
    </location>
</feature>
<feature type="binding site" evidence="1">
    <location>
        <position position="66"/>
    </location>
    <ligand>
        <name>Zn(2+)</name>
        <dbReference type="ChEBI" id="CHEBI:29105"/>
        <label>1</label>
    </ligand>
</feature>
<feature type="binding site" evidence="1">
    <location>
        <position position="68"/>
    </location>
    <ligand>
        <name>Zn(2+)</name>
        <dbReference type="ChEBI" id="CHEBI:29105"/>
        <label>1</label>
    </ligand>
</feature>
<feature type="binding site" evidence="1">
    <location>
        <position position="81"/>
    </location>
    <ligand>
        <name>Zn(2+)</name>
        <dbReference type="ChEBI" id="CHEBI:29105"/>
        <label>1</label>
    </ligand>
</feature>
<feature type="binding site" evidence="1">
    <location>
        <position position="84"/>
    </location>
    <ligand>
        <name>Zn(2+)</name>
        <dbReference type="ChEBI" id="CHEBI:29105"/>
        <label>1</label>
    </ligand>
</feature>
<feature type="binding site" evidence="1">
    <location>
        <position position="472"/>
    </location>
    <ligand>
        <name>Mg(2+)</name>
        <dbReference type="ChEBI" id="CHEBI:18420"/>
    </ligand>
</feature>
<feature type="binding site" evidence="1">
    <location>
        <position position="474"/>
    </location>
    <ligand>
        <name>Mg(2+)</name>
        <dbReference type="ChEBI" id="CHEBI:18420"/>
    </ligand>
</feature>
<feature type="binding site" evidence="1">
    <location>
        <position position="476"/>
    </location>
    <ligand>
        <name>Mg(2+)</name>
        <dbReference type="ChEBI" id="CHEBI:18420"/>
    </ligand>
</feature>
<feature type="binding site" evidence="1">
    <location>
        <position position="816"/>
    </location>
    <ligand>
        <name>Zn(2+)</name>
        <dbReference type="ChEBI" id="CHEBI:29105"/>
        <label>2</label>
    </ligand>
</feature>
<feature type="binding site" evidence="1">
    <location>
        <position position="890"/>
    </location>
    <ligand>
        <name>Zn(2+)</name>
        <dbReference type="ChEBI" id="CHEBI:29105"/>
        <label>2</label>
    </ligand>
</feature>
<feature type="binding site" evidence="1">
    <location>
        <position position="897"/>
    </location>
    <ligand>
        <name>Zn(2+)</name>
        <dbReference type="ChEBI" id="CHEBI:29105"/>
        <label>2</label>
    </ligand>
</feature>
<feature type="binding site" evidence="1">
    <location>
        <position position="900"/>
    </location>
    <ligand>
        <name>Zn(2+)</name>
        <dbReference type="ChEBI" id="CHEBI:29105"/>
        <label>2</label>
    </ligand>
</feature>
<gene>
    <name evidence="1" type="primary">rpoC</name>
    <name type="ordered locus">BVU_0812</name>
</gene>
<keyword id="KW-0240">DNA-directed RNA polymerase</keyword>
<keyword id="KW-0460">Magnesium</keyword>
<keyword id="KW-0479">Metal-binding</keyword>
<keyword id="KW-0548">Nucleotidyltransferase</keyword>
<keyword id="KW-0804">Transcription</keyword>
<keyword id="KW-0808">Transferase</keyword>
<keyword id="KW-0862">Zinc</keyword>
<evidence type="ECO:0000255" key="1">
    <source>
        <dbReference type="HAMAP-Rule" id="MF_01322"/>
    </source>
</evidence>
<accession>A6KYK2</accession>
<reference key="1">
    <citation type="journal article" date="2007" name="PLoS Biol.">
        <title>Evolution of symbiotic bacteria in the distal human intestine.</title>
        <authorList>
            <person name="Xu J."/>
            <person name="Mahowald M.A."/>
            <person name="Ley R.E."/>
            <person name="Lozupone C.A."/>
            <person name="Hamady M."/>
            <person name="Martens E.C."/>
            <person name="Henrissat B."/>
            <person name="Coutinho P.M."/>
            <person name="Minx P."/>
            <person name="Latreille P."/>
            <person name="Cordum H."/>
            <person name="Van Brunt A."/>
            <person name="Kim K."/>
            <person name="Fulton R.S."/>
            <person name="Fulton L.A."/>
            <person name="Clifton S.W."/>
            <person name="Wilson R.K."/>
            <person name="Knight R.D."/>
            <person name="Gordon J.I."/>
        </authorList>
    </citation>
    <scope>NUCLEOTIDE SEQUENCE [LARGE SCALE GENOMIC DNA]</scope>
    <source>
        <strain>ATCC 8482 / DSM 1447 / JCM 5826 / CCUG 4940 / NBRC 14291 / NCTC 11154</strain>
    </source>
</reference>